<organism>
    <name type="scientific">Escherichia coli O45:K1 (strain S88 / ExPEC)</name>
    <dbReference type="NCBI Taxonomy" id="585035"/>
    <lineage>
        <taxon>Bacteria</taxon>
        <taxon>Pseudomonadati</taxon>
        <taxon>Pseudomonadota</taxon>
        <taxon>Gammaproteobacteria</taxon>
        <taxon>Enterobacterales</taxon>
        <taxon>Enterobacteriaceae</taxon>
        <taxon>Escherichia</taxon>
    </lineage>
</organism>
<keyword id="KW-0963">Cytoplasm</keyword>
<keyword id="KW-0342">GTP-binding</keyword>
<keyword id="KW-0436">Ligase</keyword>
<keyword id="KW-0460">Magnesium</keyword>
<keyword id="KW-0479">Metal-binding</keyword>
<keyword id="KW-0547">Nucleotide-binding</keyword>
<keyword id="KW-0658">Purine biosynthesis</keyword>
<keyword id="KW-1185">Reference proteome</keyword>
<evidence type="ECO:0000255" key="1">
    <source>
        <dbReference type="HAMAP-Rule" id="MF_00011"/>
    </source>
</evidence>
<sequence>MGNNVVVLGTQWGDEGKGKIVDLLTERAKYVVRYQGGHNAGHTLVINGEKTVLHLIPSGILRENVTSIIGNGVVLSPAALMKEMKELEDRGIPVRERLLLSEACPLILDYHVALDNAREKARGAKAIGTTGRGIGPAYEDKVARRGLRVGDLFDKETFAEKLKEVMEYHNFQLVNYYKAEAVDYQKVLDDTMAVADILTSMVVDVSDLLDQARQRGDFVMFEGAQGTLLDIDHGTYPYVTSSNTTAGGVATGSGLGPRYVDYVLGILKAYSTRVGAGPFPTELFDETGEFLCKQGNEFGATTGRRRRTGWLDTVAVRRAVQLNSLSGFCLTKLDVLDGLKEVKLCVAYRMPDGREVTTTPLAADDWKGVEPIYETMPGWSESTFGVKDRSGLPQAALNYIKRIEELTGVPIDIISTGPDRTETMILRDPFDA</sequence>
<proteinExistence type="inferred from homology"/>
<accession>B7MKY1</accession>
<comment type="function">
    <text evidence="1">Plays an important role in the de novo pathway of purine nucleotide biosynthesis. Catalyzes the first committed step in the biosynthesis of AMP from IMP.</text>
</comment>
<comment type="catalytic activity">
    <reaction evidence="1">
        <text>IMP + L-aspartate + GTP = N(6)-(1,2-dicarboxyethyl)-AMP + GDP + phosphate + 2 H(+)</text>
        <dbReference type="Rhea" id="RHEA:15753"/>
        <dbReference type="ChEBI" id="CHEBI:15378"/>
        <dbReference type="ChEBI" id="CHEBI:29991"/>
        <dbReference type="ChEBI" id="CHEBI:37565"/>
        <dbReference type="ChEBI" id="CHEBI:43474"/>
        <dbReference type="ChEBI" id="CHEBI:57567"/>
        <dbReference type="ChEBI" id="CHEBI:58053"/>
        <dbReference type="ChEBI" id="CHEBI:58189"/>
        <dbReference type="EC" id="6.3.4.4"/>
    </reaction>
</comment>
<comment type="cofactor">
    <cofactor evidence="1">
        <name>Mg(2+)</name>
        <dbReference type="ChEBI" id="CHEBI:18420"/>
    </cofactor>
    <text evidence="1">Binds 1 Mg(2+) ion per subunit.</text>
</comment>
<comment type="pathway">
    <text evidence="1">Purine metabolism; AMP biosynthesis via de novo pathway; AMP from IMP: step 1/2.</text>
</comment>
<comment type="subunit">
    <text evidence="1">Homodimer.</text>
</comment>
<comment type="subcellular location">
    <subcellularLocation>
        <location evidence="1">Cytoplasm</location>
    </subcellularLocation>
</comment>
<comment type="similarity">
    <text evidence="1">Belongs to the adenylosuccinate synthetase family.</text>
</comment>
<gene>
    <name evidence="1" type="primary">purA</name>
    <name type="ordered locus">ECS88_4763</name>
</gene>
<reference key="1">
    <citation type="journal article" date="2009" name="PLoS Genet.">
        <title>Organised genome dynamics in the Escherichia coli species results in highly diverse adaptive paths.</title>
        <authorList>
            <person name="Touchon M."/>
            <person name="Hoede C."/>
            <person name="Tenaillon O."/>
            <person name="Barbe V."/>
            <person name="Baeriswyl S."/>
            <person name="Bidet P."/>
            <person name="Bingen E."/>
            <person name="Bonacorsi S."/>
            <person name="Bouchier C."/>
            <person name="Bouvet O."/>
            <person name="Calteau A."/>
            <person name="Chiapello H."/>
            <person name="Clermont O."/>
            <person name="Cruveiller S."/>
            <person name="Danchin A."/>
            <person name="Diard M."/>
            <person name="Dossat C."/>
            <person name="Karoui M.E."/>
            <person name="Frapy E."/>
            <person name="Garry L."/>
            <person name="Ghigo J.M."/>
            <person name="Gilles A.M."/>
            <person name="Johnson J."/>
            <person name="Le Bouguenec C."/>
            <person name="Lescat M."/>
            <person name="Mangenot S."/>
            <person name="Martinez-Jehanne V."/>
            <person name="Matic I."/>
            <person name="Nassif X."/>
            <person name="Oztas S."/>
            <person name="Petit M.A."/>
            <person name="Pichon C."/>
            <person name="Rouy Z."/>
            <person name="Ruf C.S."/>
            <person name="Schneider D."/>
            <person name="Tourret J."/>
            <person name="Vacherie B."/>
            <person name="Vallenet D."/>
            <person name="Medigue C."/>
            <person name="Rocha E.P.C."/>
            <person name="Denamur E."/>
        </authorList>
    </citation>
    <scope>NUCLEOTIDE SEQUENCE [LARGE SCALE GENOMIC DNA]</scope>
    <source>
        <strain>S88 / ExPEC</strain>
    </source>
</reference>
<name>PURA_ECO45</name>
<feature type="chain" id="PRO_1000194755" description="Adenylosuccinate synthetase">
    <location>
        <begin position="1"/>
        <end position="432"/>
    </location>
</feature>
<feature type="active site" description="Proton acceptor" evidence="1">
    <location>
        <position position="14"/>
    </location>
</feature>
<feature type="active site" description="Proton donor" evidence="1">
    <location>
        <position position="42"/>
    </location>
</feature>
<feature type="binding site" evidence="1">
    <location>
        <begin position="13"/>
        <end position="19"/>
    </location>
    <ligand>
        <name>GTP</name>
        <dbReference type="ChEBI" id="CHEBI:37565"/>
    </ligand>
</feature>
<feature type="binding site" description="in other chain" evidence="1">
    <location>
        <begin position="14"/>
        <end position="17"/>
    </location>
    <ligand>
        <name>IMP</name>
        <dbReference type="ChEBI" id="CHEBI:58053"/>
        <note>ligand shared between dimeric partners</note>
    </ligand>
</feature>
<feature type="binding site" evidence="1">
    <location>
        <position position="14"/>
    </location>
    <ligand>
        <name>Mg(2+)</name>
        <dbReference type="ChEBI" id="CHEBI:18420"/>
    </ligand>
</feature>
<feature type="binding site" description="in other chain" evidence="1">
    <location>
        <begin position="39"/>
        <end position="42"/>
    </location>
    <ligand>
        <name>IMP</name>
        <dbReference type="ChEBI" id="CHEBI:58053"/>
        <note>ligand shared between dimeric partners</note>
    </ligand>
</feature>
<feature type="binding site" evidence="1">
    <location>
        <begin position="41"/>
        <end position="43"/>
    </location>
    <ligand>
        <name>GTP</name>
        <dbReference type="ChEBI" id="CHEBI:37565"/>
    </ligand>
</feature>
<feature type="binding site" evidence="1">
    <location>
        <position position="41"/>
    </location>
    <ligand>
        <name>Mg(2+)</name>
        <dbReference type="ChEBI" id="CHEBI:18420"/>
    </ligand>
</feature>
<feature type="binding site" description="in other chain" evidence="1">
    <location>
        <position position="130"/>
    </location>
    <ligand>
        <name>IMP</name>
        <dbReference type="ChEBI" id="CHEBI:58053"/>
        <note>ligand shared between dimeric partners</note>
    </ligand>
</feature>
<feature type="binding site" evidence="1">
    <location>
        <position position="144"/>
    </location>
    <ligand>
        <name>IMP</name>
        <dbReference type="ChEBI" id="CHEBI:58053"/>
        <note>ligand shared between dimeric partners</note>
    </ligand>
</feature>
<feature type="binding site" description="in other chain" evidence="1">
    <location>
        <position position="225"/>
    </location>
    <ligand>
        <name>IMP</name>
        <dbReference type="ChEBI" id="CHEBI:58053"/>
        <note>ligand shared between dimeric partners</note>
    </ligand>
</feature>
<feature type="binding site" description="in other chain" evidence="1">
    <location>
        <position position="240"/>
    </location>
    <ligand>
        <name>IMP</name>
        <dbReference type="ChEBI" id="CHEBI:58053"/>
        <note>ligand shared between dimeric partners</note>
    </ligand>
</feature>
<feature type="binding site" evidence="1">
    <location>
        <begin position="300"/>
        <end position="306"/>
    </location>
    <ligand>
        <name>substrate</name>
    </ligand>
</feature>
<feature type="binding site" description="in other chain" evidence="1">
    <location>
        <position position="304"/>
    </location>
    <ligand>
        <name>IMP</name>
        <dbReference type="ChEBI" id="CHEBI:58053"/>
        <note>ligand shared between dimeric partners</note>
    </ligand>
</feature>
<feature type="binding site" evidence="1">
    <location>
        <position position="306"/>
    </location>
    <ligand>
        <name>GTP</name>
        <dbReference type="ChEBI" id="CHEBI:37565"/>
    </ligand>
</feature>
<feature type="binding site" evidence="1">
    <location>
        <begin position="332"/>
        <end position="334"/>
    </location>
    <ligand>
        <name>GTP</name>
        <dbReference type="ChEBI" id="CHEBI:37565"/>
    </ligand>
</feature>
<feature type="binding site" evidence="1">
    <location>
        <begin position="415"/>
        <end position="417"/>
    </location>
    <ligand>
        <name>GTP</name>
        <dbReference type="ChEBI" id="CHEBI:37565"/>
    </ligand>
</feature>
<protein>
    <recommendedName>
        <fullName evidence="1">Adenylosuccinate synthetase</fullName>
        <shortName evidence="1">AMPSase</shortName>
        <shortName evidence="1">AdSS</shortName>
        <ecNumber evidence="1">6.3.4.4</ecNumber>
    </recommendedName>
    <alternativeName>
        <fullName evidence="1">IMP--aspartate ligase</fullName>
    </alternativeName>
</protein>
<dbReference type="EC" id="6.3.4.4" evidence="1"/>
<dbReference type="EMBL" id="CU928161">
    <property type="protein sequence ID" value="CAR05912.1"/>
    <property type="molecule type" value="Genomic_DNA"/>
</dbReference>
<dbReference type="RefSeq" id="WP_000527955.1">
    <property type="nucleotide sequence ID" value="NC_011742.1"/>
</dbReference>
<dbReference type="SMR" id="B7MKY1"/>
<dbReference type="GeneID" id="75202411"/>
<dbReference type="KEGG" id="ecz:ECS88_4763"/>
<dbReference type="HOGENOM" id="CLU_029848_0_0_6"/>
<dbReference type="UniPathway" id="UPA00075">
    <property type="reaction ID" value="UER00335"/>
</dbReference>
<dbReference type="Proteomes" id="UP000000747">
    <property type="component" value="Chromosome"/>
</dbReference>
<dbReference type="GO" id="GO:0005737">
    <property type="term" value="C:cytoplasm"/>
    <property type="evidence" value="ECO:0007669"/>
    <property type="project" value="UniProtKB-SubCell"/>
</dbReference>
<dbReference type="GO" id="GO:0004019">
    <property type="term" value="F:adenylosuccinate synthase activity"/>
    <property type="evidence" value="ECO:0007669"/>
    <property type="project" value="UniProtKB-UniRule"/>
</dbReference>
<dbReference type="GO" id="GO:0005525">
    <property type="term" value="F:GTP binding"/>
    <property type="evidence" value="ECO:0007669"/>
    <property type="project" value="UniProtKB-UniRule"/>
</dbReference>
<dbReference type="GO" id="GO:0000287">
    <property type="term" value="F:magnesium ion binding"/>
    <property type="evidence" value="ECO:0007669"/>
    <property type="project" value="UniProtKB-UniRule"/>
</dbReference>
<dbReference type="GO" id="GO:0044208">
    <property type="term" value="P:'de novo' AMP biosynthetic process"/>
    <property type="evidence" value="ECO:0007669"/>
    <property type="project" value="UniProtKB-UniRule"/>
</dbReference>
<dbReference type="GO" id="GO:0046040">
    <property type="term" value="P:IMP metabolic process"/>
    <property type="evidence" value="ECO:0007669"/>
    <property type="project" value="TreeGrafter"/>
</dbReference>
<dbReference type="CDD" id="cd03108">
    <property type="entry name" value="AdSS"/>
    <property type="match status" value="1"/>
</dbReference>
<dbReference type="FunFam" id="1.10.300.10:FF:000001">
    <property type="entry name" value="Adenylosuccinate synthetase"/>
    <property type="match status" value="1"/>
</dbReference>
<dbReference type="FunFam" id="3.90.170.10:FF:000001">
    <property type="entry name" value="Adenylosuccinate synthetase"/>
    <property type="match status" value="1"/>
</dbReference>
<dbReference type="Gene3D" id="3.40.440.10">
    <property type="entry name" value="Adenylosuccinate Synthetase, subunit A, domain 1"/>
    <property type="match status" value="1"/>
</dbReference>
<dbReference type="Gene3D" id="1.10.300.10">
    <property type="entry name" value="Adenylosuccinate Synthetase, subunit A, domain 2"/>
    <property type="match status" value="1"/>
</dbReference>
<dbReference type="Gene3D" id="3.90.170.10">
    <property type="entry name" value="Adenylosuccinate Synthetase, subunit A, domain 3"/>
    <property type="match status" value="1"/>
</dbReference>
<dbReference type="HAMAP" id="MF_00011">
    <property type="entry name" value="Adenylosucc_synth"/>
    <property type="match status" value="1"/>
</dbReference>
<dbReference type="InterPro" id="IPR018220">
    <property type="entry name" value="Adenylosuccin_syn_GTP-bd"/>
</dbReference>
<dbReference type="InterPro" id="IPR033128">
    <property type="entry name" value="Adenylosuccin_syn_Lys_AS"/>
</dbReference>
<dbReference type="InterPro" id="IPR042109">
    <property type="entry name" value="Adenylosuccinate_synth_dom1"/>
</dbReference>
<dbReference type="InterPro" id="IPR042110">
    <property type="entry name" value="Adenylosuccinate_synth_dom2"/>
</dbReference>
<dbReference type="InterPro" id="IPR042111">
    <property type="entry name" value="Adenylosuccinate_synth_dom3"/>
</dbReference>
<dbReference type="InterPro" id="IPR001114">
    <property type="entry name" value="Adenylosuccinate_synthetase"/>
</dbReference>
<dbReference type="InterPro" id="IPR027417">
    <property type="entry name" value="P-loop_NTPase"/>
</dbReference>
<dbReference type="NCBIfam" id="NF002223">
    <property type="entry name" value="PRK01117.1"/>
    <property type="match status" value="1"/>
</dbReference>
<dbReference type="NCBIfam" id="TIGR00184">
    <property type="entry name" value="purA"/>
    <property type="match status" value="1"/>
</dbReference>
<dbReference type="PANTHER" id="PTHR11846">
    <property type="entry name" value="ADENYLOSUCCINATE SYNTHETASE"/>
    <property type="match status" value="1"/>
</dbReference>
<dbReference type="PANTHER" id="PTHR11846:SF0">
    <property type="entry name" value="ADENYLOSUCCINATE SYNTHETASE"/>
    <property type="match status" value="1"/>
</dbReference>
<dbReference type="Pfam" id="PF00709">
    <property type="entry name" value="Adenylsucc_synt"/>
    <property type="match status" value="1"/>
</dbReference>
<dbReference type="SMART" id="SM00788">
    <property type="entry name" value="Adenylsucc_synt"/>
    <property type="match status" value="1"/>
</dbReference>
<dbReference type="SUPFAM" id="SSF52540">
    <property type="entry name" value="P-loop containing nucleoside triphosphate hydrolases"/>
    <property type="match status" value="1"/>
</dbReference>
<dbReference type="PROSITE" id="PS01266">
    <property type="entry name" value="ADENYLOSUCCIN_SYN_1"/>
    <property type="match status" value="1"/>
</dbReference>
<dbReference type="PROSITE" id="PS00513">
    <property type="entry name" value="ADENYLOSUCCIN_SYN_2"/>
    <property type="match status" value="1"/>
</dbReference>